<protein>
    <recommendedName>
        <fullName evidence="1">DNA mismatch repair protein MutL</fullName>
    </recommendedName>
</protein>
<feature type="chain" id="PRO_1000192178" description="DNA mismatch repair protein MutL">
    <location>
        <begin position="1"/>
        <end position="615"/>
    </location>
</feature>
<feature type="region of interest" description="Disordered" evidence="2">
    <location>
        <begin position="362"/>
        <end position="397"/>
    </location>
</feature>
<feature type="compositionally biased region" description="Low complexity" evidence="2">
    <location>
        <begin position="378"/>
        <end position="391"/>
    </location>
</feature>
<name>MUTL_ESCF3</name>
<accession>B7LLV2</accession>
<keyword id="KW-0227">DNA damage</keyword>
<keyword id="KW-0234">DNA repair</keyword>
<gene>
    <name evidence="1" type="primary">mutL</name>
    <name type="ordered locus">EFER_4223</name>
</gene>
<sequence>MPIQVLPPQLANQIAAGEVVERPASVVKELVENSLDAGATRIDIDIERGGAKLIRIRDNGCGIKKDELALALARHATSKIASLDDLEAIISLGFRGEALASISSVSRLTLTSRTVDQQEAWQAYAEGRDMDVTVKPAAHPVGTTLEVLDLFYNTPARRKFLRTEKTEFNHIDEIIRRIALARFDVTINLSHNGKIVRQYRAVPEGGQKERRLGAICGTAFLEHALAIEWQHGDLTLRGWVADPNHTTPTLAEIQYCYVNGRMMRDRLINHAIRQACENKLGADQQPAFVLYLEIDPHQVDVNVHPAKHEVRFHQSRLVHDFIYQGVLSVLQQQLETPLPLDDEPQPAPRTIPENRVAAGRNHFAEPAVREPVAPRYSPAPASGGRPAASWPNAQPGYQKQQGEVYRQLLQTPAPMQKPKAPEPQEPALAANSQSFGRVLTIVHSDCALLERDGNISLLALPVAERWLRQAQLTPGETPVCAQPLLIPLRLKVSGEEKSALEKAQSALAELGIDFQSDAQYVTIRAVPLPLRQQNLQILIPELIGYLAKQSVFEPGNIAQWIARNLMSEHAQWSMAQAITLLADVERLCPQLVKTPPGGLLQSVDLHPAIKALKDE</sequence>
<evidence type="ECO:0000255" key="1">
    <source>
        <dbReference type="HAMAP-Rule" id="MF_00149"/>
    </source>
</evidence>
<evidence type="ECO:0000256" key="2">
    <source>
        <dbReference type="SAM" id="MobiDB-lite"/>
    </source>
</evidence>
<dbReference type="EMBL" id="CU928158">
    <property type="protein sequence ID" value="CAQ91642.1"/>
    <property type="molecule type" value="Genomic_DNA"/>
</dbReference>
<dbReference type="RefSeq" id="WP_015953939.1">
    <property type="nucleotide sequence ID" value="NC_011740.1"/>
</dbReference>
<dbReference type="SMR" id="B7LLV2"/>
<dbReference type="GeneID" id="75059189"/>
<dbReference type="KEGG" id="efe:EFER_4223"/>
<dbReference type="HOGENOM" id="CLU_004131_5_1_6"/>
<dbReference type="OrthoDB" id="9763467at2"/>
<dbReference type="Proteomes" id="UP000000745">
    <property type="component" value="Chromosome"/>
</dbReference>
<dbReference type="GO" id="GO:0032300">
    <property type="term" value="C:mismatch repair complex"/>
    <property type="evidence" value="ECO:0007669"/>
    <property type="project" value="InterPro"/>
</dbReference>
<dbReference type="GO" id="GO:0005524">
    <property type="term" value="F:ATP binding"/>
    <property type="evidence" value="ECO:0007669"/>
    <property type="project" value="InterPro"/>
</dbReference>
<dbReference type="GO" id="GO:0016887">
    <property type="term" value="F:ATP hydrolysis activity"/>
    <property type="evidence" value="ECO:0007669"/>
    <property type="project" value="InterPro"/>
</dbReference>
<dbReference type="GO" id="GO:0140664">
    <property type="term" value="F:ATP-dependent DNA damage sensor activity"/>
    <property type="evidence" value="ECO:0007669"/>
    <property type="project" value="InterPro"/>
</dbReference>
<dbReference type="GO" id="GO:0030983">
    <property type="term" value="F:mismatched DNA binding"/>
    <property type="evidence" value="ECO:0007669"/>
    <property type="project" value="InterPro"/>
</dbReference>
<dbReference type="GO" id="GO:0006298">
    <property type="term" value="P:mismatch repair"/>
    <property type="evidence" value="ECO:0007669"/>
    <property type="project" value="UniProtKB-UniRule"/>
</dbReference>
<dbReference type="CDD" id="cd16926">
    <property type="entry name" value="HATPase_MutL-MLH-PMS-like"/>
    <property type="match status" value="1"/>
</dbReference>
<dbReference type="CDD" id="cd03482">
    <property type="entry name" value="MutL_Trans_MutL"/>
    <property type="match status" value="1"/>
</dbReference>
<dbReference type="FunFam" id="3.30.230.10:FF:000013">
    <property type="entry name" value="DNA mismatch repair endonuclease MutL"/>
    <property type="match status" value="1"/>
</dbReference>
<dbReference type="FunFam" id="3.30.565.10:FF:000003">
    <property type="entry name" value="DNA mismatch repair endonuclease MutL"/>
    <property type="match status" value="1"/>
</dbReference>
<dbReference type="FunFam" id="3.30.1370.100:FF:000002">
    <property type="entry name" value="DNA mismatch repair protein MutL"/>
    <property type="match status" value="1"/>
</dbReference>
<dbReference type="Gene3D" id="3.30.230.10">
    <property type="match status" value="1"/>
</dbReference>
<dbReference type="Gene3D" id="3.30.565.10">
    <property type="entry name" value="Histidine kinase-like ATPase, C-terminal domain"/>
    <property type="match status" value="1"/>
</dbReference>
<dbReference type="Gene3D" id="3.30.1540.20">
    <property type="entry name" value="MutL, C-terminal domain, dimerisation subdomain"/>
    <property type="match status" value="1"/>
</dbReference>
<dbReference type="Gene3D" id="3.30.1370.100">
    <property type="entry name" value="MutL, C-terminal domain, regulatory subdomain"/>
    <property type="match status" value="1"/>
</dbReference>
<dbReference type="HAMAP" id="MF_00149">
    <property type="entry name" value="DNA_mis_repair"/>
    <property type="match status" value="1"/>
</dbReference>
<dbReference type="InterPro" id="IPR014762">
    <property type="entry name" value="DNA_mismatch_repair_CS"/>
</dbReference>
<dbReference type="InterPro" id="IPR020667">
    <property type="entry name" value="DNA_mismatch_repair_MutL"/>
</dbReference>
<dbReference type="InterPro" id="IPR013507">
    <property type="entry name" value="DNA_mismatch_S5_2-like"/>
</dbReference>
<dbReference type="InterPro" id="IPR036890">
    <property type="entry name" value="HATPase_C_sf"/>
</dbReference>
<dbReference type="InterPro" id="IPR002099">
    <property type="entry name" value="MutL/Mlh/PMS"/>
</dbReference>
<dbReference type="InterPro" id="IPR038973">
    <property type="entry name" value="MutL/Mlh/Pms-like"/>
</dbReference>
<dbReference type="InterPro" id="IPR014790">
    <property type="entry name" value="MutL_C"/>
</dbReference>
<dbReference type="InterPro" id="IPR042120">
    <property type="entry name" value="MutL_C_dimsub"/>
</dbReference>
<dbReference type="InterPro" id="IPR042121">
    <property type="entry name" value="MutL_C_regsub"/>
</dbReference>
<dbReference type="InterPro" id="IPR037198">
    <property type="entry name" value="MutL_C_sf"/>
</dbReference>
<dbReference type="InterPro" id="IPR020568">
    <property type="entry name" value="Ribosomal_Su5_D2-typ_SF"/>
</dbReference>
<dbReference type="InterPro" id="IPR014721">
    <property type="entry name" value="Ribsml_uS5_D2-typ_fold_subgr"/>
</dbReference>
<dbReference type="NCBIfam" id="TIGR00585">
    <property type="entry name" value="mutl"/>
    <property type="match status" value="1"/>
</dbReference>
<dbReference type="NCBIfam" id="NF000948">
    <property type="entry name" value="PRK00095.1-1"/>
    <property type="match status" value="1"/>
</dbReference>
<dbReference type="PANTHER" id="PTHR10073">
    <property type="entry name" value="DNA MISMATCH REPAIR PROTEIN MLH, PMS, MUTL"/>
    <property type="match status" value="1"/>
</dbReference>
<dbReference type="PANTHER" id="PTHR10073:SF12">
    <property type="entry name" value="DNA MISMATCH REPAIR PROTEIN MLH1"/>
    <property type="match status" value="1"/>
</dbReference>
<dbReference type="Pfam" id="PF01119">
    <property type="entry name" value="DNA_mis_repair"/>
    <property type="match status" value="1"/>
</dbReference>
<dbReference type="Pfam" id="PF13589">
    <property type="entry name" value="HATPase_c_3"/>
    <property type="match status" value="1"/>
</dbReference>
<dbReference type="Pfam" id="PF08676">
    <property type="entry name" value="MutL_C"/>
    <property type="match status" value="1"/>
</dbReference>
<dbReference type="SMART" id="SM01340">
    <property type="entry name" value="DNA_mis_repair"/>
    <property type="match status" value="1"/>
</dbReference>
<dbReference type="SMART" id="SM00853">
    <property type="entry name" value="MutL_C"/>
    <property type="match status" value="1"/>
</dbReference>
<dbReference type="SUPFAM" id="SSF55874">
    <property type="entry name" value="ATPase domain of HSP90 chaperone/DNA topoisomerase II/histidine kinase"/>
    <property type="match status" value="1"/>
</dbReference>
<dbReference type="SUPFAM" id="SSF118116">
    <property type="entry name" value="DNA mismatch repair protein MutL"/>
    <property type="match status" value="1"/>
</dbReference>
<dbReference type="SUPFAM" id="SSF54211">
    <property type="entry name" value="Ribosomal protein S5 domain 2-like"/>
    <property type="match status" value="1"/>
</dbReference>
<dbReference type="PROSITE" id="PS00058">
    <property type="entry name" value="DNA_MISMATCH_REPAIR_1"/>
    <property type="match status" value="1"/>
</dbReference>
<organism>
    <name type="scientific">Escherichia fergusonii (strain ATCC 35469 / DSM 13698 / CCUG 18766 / IAM 14443 / JCM 21226 / LMG 7866 / NBRC 102419 / NCTC 12128 / CDC 0568-73)</name>
    <dbReference type="NCBI Taxonomy" id="585054"/>
    <lineage>
        <taxon>Bacteria</taxon>
        <taxon>Pseudomonadati</taxon>
        <taxon>Pseudomonadota</taxon>
        <taxon>Gammaproteobacteria</taxon>
        <taxon>Enterobacterales</taxon>
        <taxon>Enterobacteriaceae</taxon>
        <taxon>Escherichia</taxon>
    </lineage>
</organism>
<comment type="function">
    <text evidence="1">This protein is involved in the repair of mismatches in DNA. It is required for dam-dependent methyl-directed DNA mismatch repair. May act as a 'molecular matchmaker', a protein that promotes the formation of a stable complex between two or more DNA-binding proteins in an ATP-dependent manner without itself being part of a final effector complex.</text>
</comment>
<comment type="similarity">
    <text evidence="1">Belongs to the DNA mismatch repair MutL/HexB family.</text>
</comment>
<proteinExistence type="inferred from homology"/>
<reference key="1">
    <citation type="journal article" date="2009" name="PLoS Genet.">
        <title>Organised genome dynamics in the Escherichia coli species results in highly diverse adaptive paths.</title>
        <authorList>
            <person name="Touchon M."/>
            <person name="Hoede C."/>
            <person name="Tenaillon O."/>
            <person name="Barbe V."/>
            <person name="Baeriswyl S."/>
            <person name="Bidet P."/>
            <person name="Bingen E."/>
            <person name="Bonacorsi S."/>
            <person name="Bouchier C."/>
            <person name="Bouvet O."/>
            <person name="Calteau A."/>
            <person name="Chiapello H."/>
            <person name="Clermont O."/>
            <person name="Cruveiller S."/>
            <person name="Danchin A."/>
            <person name="Diard M."/>
            <person name="Dossat C."/>
            <person name="Karoui M.E."/>
            <person name="Frapy E."/>
            <person name="Garry L."/>
            <person name="Ghigo J.M."/>
            <person name="Gilles A.M."/>
            <person name="Johnson J."/>
            <person name="Le Bouguenec C."/>
            <person name="Lescat M."/>
            <person name="Mangenot S."/>
            <person name="Martinez-Jehanne V."/>
            <person name="Matic I."/>
            <person name="Nassif X."/>
            <person name="Oztas S."/>
            <person name="Petit M.A."/>
            <person name="Pichon C."/>
            <person name="Rouy Z."/>
            <person name="Ruf C.S."/>
            <person name="Schneider D."/>
            <person name="Tourret J."/>
            <person name="Vacherie B."/>
            <person name="Vallenet D."/>
            <person name="Medigue C."/>
            <person name="Rocha E.P.C."/>
            <person name="Denamur E."/>
        </authorList>
    </citation>
    <scope>NUCLEOTIDE SEQUENCE [LARGE SCALE GENOMIC DNA]</scope>
    <source>
        <strain>ATCC 35469 / DSM 13698 / BCRC 15582 / CCUG 18766 / IAM 14443 / JCM 21226 / LMG 7866 / NBRC 102419 / NCTC 12128 / CDC 0568-73</strain>
    </source>
</reference>